<dbReference type="EC" id="2.4.1.21" evidence="1"/>
<dbReference type="EMBL" id="CP000749">
    <property type="protein sequence ID" value="ABR70170.1"/>
    <property type="molecule type" value="Genomic_DNA"/>
</dbReference>
<dbReference type="SMR" id="A6VUP1"/>
<dbReference type="STRING" id="400668.Mmwyl1_1241"/>
<dbReference type="CAZy" id="GT5">
    <property type="family name" value="Glycosyltransferase Family 5"/>
</dbReference>
<dbReference type="KEGG" id="mmw:Mmwyl1_1241"/>
<dbReference type="eggNOG" id="COG0297">
    <property type="taxonomic scope" value="Bacteria"/>
</dbReference>
<dbReference type="HOGENOM" id="CLU_009583_18_4_6"/>
<dbReference type="OrthoDB" id="9808590at2"/>
<dbReference type="UniPathway" id="UPA00164"/>
<dbReference type="GO" id="GO:0009011">
    <property type="term" value="F:alpha-1,4-glucan glucosyltransferase (ADP-glucose donor) activity"/>
    <property type="evidence" value="ECO:0007669"/>
    <property type="project" value="UniProtKB-UniRule"/>
</dbReference>
<dbReference type="GO" id="GO:0004373">
    <property type="term" value="F:alpha-1,4-glucan glucosyltransferase (UDP-glucose donor) activity"/>
    <property type="evidence" value="ECO:0007669"/>
    <property type="project" value="InterPro"/>
</dbReference>
<dbReference type="GO" id="GO:0005978">
    <property type="term" value="P:glycogen biosynthetic process"/>
    <property type="evidence" value="ECO:0007669"/>
    <property type="project" value="UniProtKB-UniRule"/>
</dbReference>
<dbReference type="CDD" id="cd03791">
    <property type="entry name" value="GT5_Glycogen_synthase_DULL1-like"/>
    <property type="match status" value="1"/>
</dbReference>
<dbReference type="Gene3D" id="3.40.50.2000">
    <property type="entry name" value="Glycogen Phosphorylase B"/>
    <property type="match status" value="2"/>
</dbReference>
<dbReference type="HAMAP" id="MF_00484">
    <property type="entry name" value="Glycogen_synth"/>
    <property type="match status" value="1"/>
</dbReference>
<dbReference type="InterPro" id="IPR001296">
    <property type="entry name" value="Glyco_trans_1"/>
</dbReference>
<dbReference type="InterPro" id="IPR011835">
    <property type="entry name" value="GS/SS"/>
</dbReference>
<dbReference type="InterPro" id="IPR013534">
    <property type="entry name" value="Starch_synth_cat_dom"/>
</dbReference>
<dbReference type="NCBIfam" id="TIGR02095">
    <property type="entry name" value="glgA"/>
    <property type="match status" value="1"/>
</dbReference>
<dbReference type="NCBIfam" id="NF001899">
    <property type="entry name" value="PRK00654.1-2"/>
    <property type="match status" value="1"/>
</dbReference>
<dbReference type="PANTHER" id="PTHR45825:SF11">
    <property type="entry name" value="ALPHA AMYLASE DOMAIN-CONTAINING PROTEIN"/>
    <property type="match status" value="1"/>
</dbReference>
<dbReference type="PANTHER" id="PTHR45825">
    <property type="entry name" value="GRANULE-BOUND STARCH SYNTHASE 1, CHLOROPLASTIC/AMYLOPLASTIC"/>
    <property type="match status" value="1"/>
</dbReference>
<dbReference type="Pfam" id="PF08323">
    <property type="entry name" value="Glyco_transf_5"/>
    <property type="match status" value="1"/>
</dbReference>
<dbReference type="Pfam" id="PF00534">
    <property type="entry name" value="Glycos_transf_1"/>
    <property type="match status" value="1"/>
</dbReference>
<dbReference type="SUPFAM" id="SSF53756">
    <property type="entry name" value="UDP-Glycosyltransferase/glycogen phosphorylase"/>
    <property type="match status" value="1"/>
</dbReference>
<protein>
    <recommendedName>
        <fullName evidence="1">Glycogen synthase</fullName>
        <ecNumber evidence="1">2.4.1.21</ecNumber>
    </recommendedName>
    <alternativeName>
        <fullName evidence="1">Starch [bacterial glycogen] synthase</fullName>
    </alternativeName>
</protein>
<name>GLGA_MARMS</name>
<keyword id="KW-0320">Glycogen biosynthesis</keyword>
<keyword id="KW-0328">Glycosyltransferase</keyword>
<keyword id="KW-0808">Transferase</keyword>
<accession>A6VUP1</accession>
<sequence>MKILFAASEIYPLIKTGGLADVAGALPVALRKKGHDVKLIMPAYQGILEKVAPIQKSINLGNPFGVGDLLLLETHIPENDTPIWLLQCQALYEREDGPYVDKNGIDFEDNHIRFAALSWATATLALHGHLMNWQADILHLNDWQTGFAAAYLESWKVEHIPVVTTVHNLRYNGSFDMNQFSAMHLSPELLNMHGMEFYGRFSGLKAGLVYANAVTTVSPTYAKEILTPEYGDGLDGALRAMQDRLVGILNGVDYNQWSPEKDTLIPHNYDIDTLSQKQANKLALLQENGLSEDLNQPVFGVVSRLTEQKGLDLVLQVMPALLEKGARLVVLGSGDKYLESQYLELQNNYPNQVSVRIGYFEDYSHRLQAGIDALLIPSRFEPCGLTQLYALKYGTLPIVRQTGGLADTVFEDGERANGFVFKEASAKALQAAMERSIECFHDTNRWQEKQKNAMCYDYSWDAVTDQWISLYESLIN</sequence>
<feature type="chain" id="PRO_1000081327" description="Glycogen synthase">
    <location>
        <begin position="1"/>
        <end position="476"/>
    </location>
</feature>
<feature type="binding site" evidence="1">
    <location>
        <position position="15"/>
    </location>
    <ligand>
        <name>ADP-alpha-D-glucose</name>
        <dbReference type="ChEBI" id="CHEBI:57498"/>
    </ligand>
</feature>
<evidence type="ECO:0000255" key="1">
    <source>
        <dbReference type="HAMAP-Rule" id="MF_00484"/>
    </source>
</evidence>
<gene>
    <name evidence="1" type="primary">glgA</name>
    <name type="ordered locus">Mmwyl1_1241</name>
</gene>
<organism>
    <name type="scientific">Marinomonas sp. (strain MWYL1)</name>
    <dbReference type="NCBI Taxonomy" id="400668"/>
    <lineage>
        <taxon>Bacteria</taxon>
        <taxon>Pseudomonadati</taxon>
        <taxon>Pseudomonadota</taxon>
        <taxon>Gammaproteobacteria</taxon>
        <taxon>Oceanospirillales</taxon>
        <taxon>Oceanospirillaceae</taxon>
        <taxon>Marinomonas</taxon>
    </lineage>
</organism>
<comment type="function">
    <text evidence="1">Synthesizes alpha-1,4-glucan chains using ADP-glucose.</text>
</comment>
<comment type="catalytic activity">
    <reaction evidence="1">
        <text>[(1-&gt;4)-alpha-D-glucosyl](n) + ADP-alpha-D-glucose = [(1-&gt;4)-alpha-D-glucosyl](n+1) + ADP + H(+)</text>
        <dbReference type="Rhea" id="RHEA:18189"/>
        <dbReference type="Rhea" id="RHEA-COMP:9584"/>
        <dbReference type="Rhea" id="RHEA-COMP:9587"/>
        <dbReference type="ChEBI" id="CHEBI:15378"/>
        <dbReference type="ChEBI" id="CHEBI:15444"/>
        <dbReference type="ChEBI" id="CHEBI:57498"/>
        <dbReference type="ChEBI" id="CHEBI:456216"/>
        <dbReference type="EC" id="2.4.1.21"/>
    </reaction>
</comment>
<comment type="pathway">
    <text evidence="1">Glycan biosynthesis; glycogen biosynthesis.</text>
</comment>
<comment type="similarity">
    <text evidence="1">Belongs to the glycosyltransferase 1 family. Bacterial/plant glycogen synthase subfamily.</text>
</comment>
<proteinExistence type="inferred from homology"/>
<reference key="1">
    <citation type="submission" date="2007-06" db="EMBL/GenBank/DDBJ databases">
        <title>Complete sequence of Marinomonas sp. MWYL1.</title>
        <authorList>
            <consortium name="US DOE Joint Genome Institute"/>
            <person name="Copeland A."/>
            <person name="Lucas S."/>
            <person name="Lapidus A."/>
            <person name="Barry K."/>
            <person name="Glavina del Rio T."/>
            <person name="Dalin E."/>
            <person name="Tice H."/>
            <person name="Pitluck S."/>
            <person name="Kiss H."/>
            <person name="Brettin T."/>
            <person name="Bruce D."/>
            <person name="Detter J.C."/>
            <person name="Han C."/>
            <person name="Schmutz J."/>
            <person name="Larimer F."/>
            <person name="Land M."/>
            <person name="Hauser L."/>
            <person name="Kyrpides N."/>
            <person name="Kim E."/>
            <person name="Johnston A.W.B."/>
            <person name="Todd J.D."/>
            <person name="Rogers R."/>
            <person name="Wexler M."/>
            <person name="Bond P.L."/>
            <person name="Li Y."/>
            <person name="Richardson P."/>
        </authorList>
    </citation>
    <scope>NUCLEOTIDE SEQUENCE [LARGE SCALE GENOMIC DNA]</scope>
    <source>
        <strain>MWYL1</strain>
    </source>
</reference>